<name>ARNC_YERPB</name>
<gene>
    <name evidence="1" type="primary">arnC</name>
    <name type="ordered locus">YPTS_2404</name>
</gene>
<keyword id="KW-0046">Antibiotic resistance</keyword>
<keyword id="KW-0997">Cell inner membrane</keyword>
<keyword id="KW-1003">Cell membrane</keyword>
<keyword id="KW-0328">Glycosyltransferase</keyword>
<keyword id="KW-0441">Lipid A biosynthesis</keyword>
<keyword id="KW-0444">Lipid biosynthesis</keyword>
<keyword id="KW-0443">Lipid metabolism</keyword>
<keyword id="KW-0448">Lipopolysaccharide biosynthesis</keyword>
<keyword id="KW-0472">Membrane</keyword>
<keyword id="KW-0808">Transferase</keyword>
<keyword id="KW-0812">Transmembrane</keyword>
<keyword id="KW-1133">Transmembrane helix</keyword>
<feature type="chain" id="PRO_1000137925" description="Undecaprenyl-phosphate 4-deoxy-4-formamido-L-arabinose transferase">
    <location>
        <begin position="1"/>
        <end position="327"/>
    </location>
</feature>
<feature type="transmembrane region" description="Helical" evidence="1">
    <location>
        <begin position="235"/>
        <end position="255"/>
    </location>
</feature>
<feature type="transmembrane region" description="Helical" evidence="1">
    <location>
        <begin position="270"/>
        <end position="290"/>
    </location>
</feature>
<evidence type="ECO:0000255" key="1">
    <source>
        <dbReference type="HAMAP-Rule" id="MF_01164"/>
    </source>
</evidence>
<organism>
    <name type="scientific">Yersinia pseudotuberculosis serotype IB (strain PB1/+)</name>
    <dbReference type="NCBI Taxonomy" id="502801"/>
    <lineage>
        <taxon>Bacteria</taxon>
        <taxon>Pseudomonadati</taxon>
        <taxon>Pseudomonadota</taxon>
        <taxon>Gammaproteobacteria</taxon>
        <taxon>Enterobacterales</taxon>
        <taxon>Yersiniaceae</taxon>
        <taxon>Yersinia</taxon>
    </lineage>
</organism>
<dbReference type="EC" id="2.4.2.53" evidence="1"/>
<dbReference type="EMBL" id="CP001048">
    <property type="protein sequence ID" value="ACC89365.1"/>
    <property type="molecule type" value="Genomic_DNA"/>
</dbReference>
<dbReference type="RefSeq" id="WP_011192543.1">
    <property type="nucleotide sequence ID" value="NZ_CP009780.1"/>
</dbReference>
<dbReference type="SMR" id="B2K5L4"/>
<dbReference type="CAZy" id="GT2">
    <property type="family name" value="Glycosyltransferase Family 2"/>
</dbReference>
<dbReference type="GeneID" id="49785666"/>
<dbReference type="KEGG" id="ypb:YPTS_2404"/>
<dbReference type="PATRIC" id="fig|502801.10.peg.1810"/>
<dbReference type="UniPathway" id="UPA00030"/>
<dbReference type="UniPathway" id="UPA00036">
    <property type="reaction ID" value="UER00495"/>
</dbReference>
<dbReference type="GO" id="GO:0005886">
    <property type="term" value="C:plasma membrane"/>
    <property type="evidence" value="ECO:0007669"/>
    <property type="project" value="UniProtKB-SubCell"/>
</dbReference>
<dbReference type="GO" id="GO:0016780">
    <property type="term" value="F:phosphotransferase activity, for other substituted phosphate groups"/>
    <property type="evidence" value="ECO:0007669"/>
    <property type="project" value="UniProtKB-UniRule"/>
</dbReference>
<dbReference type="GO" id="GO:0099621">
    <property type="term" value="F:undecaprenyl-phosphate 4-deoxy-4-formamido-L-arabinose transferase activity"/>
    <property type="evidence" value="ECO:0007669"/>
    <property type="project" value="UniProtKB-EC"/>
</dbReference>
<dbReference type="GO" id="GO:0036108">
    <property type="term" value="P:4-amino-4-deoxy-alpha-L-arabinopyranosyl undecaprenyl phosphate biosynthetic process"/>
    <property type="evidence" value="ECO:0007669"/>
    <property type="project" value="UniProtKB-UniRule"/>
</dbReference>
<dbReference type="GO" id="GO:0009245">
    <property type="term" value="P:lipid A biosynthetic process"/>
    <property type="evidence" value="ECO:0007669"/>
    <property type="project" value="UniProtKB-UniRule"/>
</dbReference>
<dbReference type="GO" id="GO:0009103">
    <property type="term" value="P:lipopolysaccharide biosynthetic process"/>
    <property type="evidence" value="ECO:0007669"/>
    <property type="project" value="UniProtKB-UniRule"/>
</dbReference>
<dbReference type="GO" id="GO:0046677">
    <property type="term" value="P:response to antibiotic"/>
    <property type="evidence" value="ECO:0007669"/>
    <property type="project" value="UniProtKB-KW"/>
</dbReference>
<dbReference type="CDD" id="cd04187">
    <property type="entry name" value="DPM1_like_bac"/>
    <property type="match status" value="1"/>
</dbReference>
<dbReference type="FunFam" id="3.90.550.10:FF:000019">
    <property type="entry name" value="Undecaprenyl-phosphate 4-deoxy-4-formamido-L-arabinose transferase"/>
    <property type="match status" value="1"/>
</dbReference>
<dbReference type="Gene3D" id="3.90.550.10">
    <property type="entry name" value="Spore Coat Polysaccharide Biosynthesis Protein SpsA, Chain A"/>
    <property type="match status" value="1"/>
</dbReference>
<dbReference type="HAMAP" id="MF_01164">
    <property type="entry name" value="ArnC_transfer"/>
    <property type="match status" value="1"/>
</dbReference>
<dbReference type="InterPro" id="IPR022857">
    <property type="entry name" value="ArnC_tfrase"/>
</dbReference>
<dbReference type="InterPro" id="IPR001173">
    <property type="entry name" value="Glyco_trans_2-like"/>
</dbReference>
<dbReference type="InterPro" id="IPR050256">
    <property type="entry name" value="Glycosyltransferase_2"/>
</dbReference>
<dbReference type="InterPro" id="IPR029044">
    <property type="entry name" value="Nucleotide-diphossugar_trans"/>
</dbReference>
<dbReference type="NCBIfam" id="NF007986">
    <property type="entry name" value="PRK10714.1"/>
    <property type="match status" value="1"/>
</dbReference>
<dbReference type="PANTHER" id="PTHR48090:SF3">
    <property type="entry name" value="UNDECAPRENYL-PHOSPHATE 4-DEOXY-4-FORMAMIDO-L-ARABINOSE TRANSFERASE"/>
    <property type="match status" value="1"/>
</dbReference>
<dbReference type="PANTHER" id="PTHR48090">
    <property type="entry name" value="UNDECAPRENYL-PHOSPHATE 4-DEOXY-4-FORMAMIDO-L-ARABINOSE TRANSFERASE-RELATED"/>
    <property type="match status" value="1"/>
</dbReference>
<dbReference type="Pfam" id="PF00535">
    <property type="entry name" value="Glycos_transf_2"/>
    <property type="match status" value="1"/>
</dbReference>
<dbReference type="SUPFAM" id="SSF53448">
    <property type="entry name" value="Nucleotide-diphospho-sugar transferases"/>
    <property type="match status" value="1"/>
</dbReference>
<comment type="function">
    <text evidence="1">Catalyzes the transfer of 4-deoxy-4-formamido-L-arabinose from UDP to undecaprenyl phosphate. The modified arabinose is attached to lipid A and is required for resistance to polymyxin and cationic antimicrobial peptides.</text>
</comment>
<comment type="catalytic activity">
    <reaction evidence="1">
        <text>UDP-4-deoxy-4-formamido-beta-L-arabinose + di-trans,octa-cis-undecaprenyl phosphate = 4-deoxy-4-formamido-alpha-L-arabinopyranosyl di-trans,octa-cis-undecaprenyl phosphate + UDP</text>
        <dbReference type="Rhea" id="RHEA:27722"/>
        <dbReference type="ChEBI" id="CHEBI:58223"/>
        <dbReference type="ChEBI" id="CHEBI:58709"/>
        <dbReference type="ChEBI" id="CHEBI:58909"/>
        <dbReference type="ChEBI" id="CHEBI:60392"/>
        <dbReference type="EC" id="2.4.2.53"/>
    </reaction>
</comment>
<comment type="pathway">
    <text evidence="1">Glycolipid biosynthesis; 4-amino-4-deoxy-alpha-L-arabinose undecaprenyl phosphate biosynthesis; 4-amino-4-deoxy-alpha-L-arabinose undecaprenyl phosphate from UDP-4-deoxy-4-formamido-beta-L-arabinose and undecaprenyl phosphate: step 1/2.</text>
</comment>
<comment type="pathway">
    <text evidence="1">Bacterial outer membrane biogenesis; lipopolysaccharide biosynthesis.</text>
</comment>
<comment type="subcellular location">
    <subcellularLocation>
        <location evidence="1">Cell inner membrane</location>
        <topology evidence="1">Multi-pass membrane protein</topology>
    </subcellularLocation>
</comment>
<comment type="similarity">
    <text evidence="1">Belongs to the glycosyltransferase 2 family.</text>
</comment>
<sequence length="327" mass="36433">MSLNEPIKKVSIVIPVYNEQESLPALIDRTTAACKLLTQAYEIILVDDGSSDNSTELLTAAANDPDSHIIAILLNRNYGQHSAIMAGFNQVSGDLIITLDADLQNPPEEIPRLVHVAEEGYDVVGTVRANRQDSLFRKTASRMINMMIQRATGKSMGDYGCMLRAYRRHIVEAMLHCHERSTFIPILANTFARRTTEITVHHAEREFGNSKYSLMRLINLMYDLITCLTTTPLRLLSLVGSAIALLGFTFSVLLVALRLIFGPEWAGGGVFTLFAVLFMFIGAQFVGMGLLGEYIGRIYNDVRARPRYFVQKVVGAEQTENNQDVEK</sequence>
<reference key="1">
    <citation type="submission" date="2008-04" db="EMBL/GenBank/DDBJ databases">
        <title>Complete sequence of Yersinia pseudotuberculosis PB1/+.</title>
        <authorList>
            <person name="Copeland A."/>
            <person name="Lucas S."/>
            <person name="Lapidus A."/>
            <person name="Glavina del Rio T."/>
            <person name="Dalin E."/>
            <person name="Tice H."/>
            <person name="Bruce D."/>
            <person name="Goodwin L."/>
            <person name="Pitluck S."/>
            <person name="Munk A.C."/>
            <person name="Brettin T."/>
            <person name="Detter J.C."/>
            <person name="Han C."/>
            <person name="Tapia R."/>
            <person name="Schmutz J."/>
            <person name="Larimer F."/>
            <person name="Land M."/>
            <person name="Hauser L."/>
            <person name="Challacombe J.F."/>
            <person name="Green L."/>
            <person name="Lindler L.E."/>
            <person name="Nikolich M.P."/>
            <person name="Richardson P."/>
        </authorList>
    </citation>
    <scope>NUCLEOTIDE SEQUENCE [LARGE SCALE GENOMIC DNA]</scope>
    <source>
        <strain>PB1/+</strain>
    </source>
</reference>
<accession>B2K5L4</accession>
<proteinExistence type="inferred from homology"/>
<protein>
    <recommendedName>
        <fullName evidence="1">Undecaprenyl-phosphate 4-deoxy-4-formamido-L-arabinose transferase</fullName>
        <ecNumber evidence="1">2.4.2.53</ecNumber>
    </recommendedName>
    <alternativeName>
        <fullName evidence="1">Undecaprenyl-phosphate Ara4FN transferase</fullName>
        <shortName evidence="1">Ara4FN transferase</shortName>
    </alternativeName>
</protein>